<reference key="1">
    <citation type="submission" date="2008-04" db="EMBL/GenBank/DDBJ databases">
        <title>Complete sequence of chromosome of Exiguobacterium sibiricum 255-15.</title>
        <authorList>
            <consortium name="US DOE Joint Genome Institute"/>
            <person name="Copeland A."/>
            <person name="Lucas S."/>
            <person name="Lapidus A."/>
            <person name="Glavina del Rio T."/>
            <person name="Dalin E."/>
            <person name="Tice H."/>
            <person name="Bruce D."/>
            <person name="Goodwin L."/>
            <person name="Pitluck S."/>
            <person name="Kiss H."/>
            <person name="Chertkov O."/>
            <person name="Monk C."/>
            <person name="Brettin T."/>
            <person name="Detter J.C."/>
            <person name="Han C."/>
            <person name="Kuske C.R."/>
            <person name="Schmutz J."/>
            <person name="Larimer F."/>
            <person name="Land M."/>
            <person name="Hauser L."/>
            <person name="Kyrpides N."/>
            <person name="Mikhailova N."/>
            <person name="Vishnivetskaya T."/>
            <person name="Rodrigues D.F."/>
            <person name="Gilichinsky D."/>
            <person name="Tiedje J."/>
            <person name="Richardson P."/>
        </authorList>
    </citation>
    <scope>NUCLEOTIDE SEQUENCE [LARGE SCALE GENOMIC DNA]</scope>
    <source>
        <strain>DSM 17290 / CCUG 55495 / CIP 109462 / JCM 13490 / 255-15</strain>
    </source>
</reference>
<feature type="chain" id="PRO_1000091102" description="UDP-N-acetylmuramate--L-alanine ligase">
    <location>
        <begin position="1"/>
        <end position="431"/>
    </location>
</feature>
<feature type="binding site" evidence="1">
    <location>
        <begin position="108"/>
        <end position="114"/>
    </location>
    <ligand>
        <name>ATP</name>
        <dbReference type="ChEBI" id="CHEBI:30616"/>
    </ligand>
</feature>
<comment type="function">
    <text evidence="1">Cell wall formation.</text>
</comment>
<comment type="catalytic activity">
    <reaction evidence="1">
        <text>UDP-N-acetyl-alpha-D-muramate + L-alanine + ATP = UDP-N-acetyl-alpha-D-muramoyl-L-alanine + ADP + phosphate + H(+)</text>
        <dbReference type="Rhea" id="RHEA:23372"/>
        <dbReference type="ChEBI" id="CHEBI:15378"/>
        <dbReference type="ChEBI" id="CHEBI:30616"/>
        <dbReference type="ChEBI" id="CHEBI:43474"/>
        <dbReference type="ChEBI" id="CHEBI:57972"/>
        <dbReference type="ChEBI" id="CHEBI:70757"/>
        <dbReference type="ChEBI" id="CHEBI:83898"/>
        <dbReference type="ChEBI" id="CHEBI:456216"/>
        <dbReference type="EC" id="6.3.2.8"/>
    </reaction>
</comment>
<comment type="pathway">
    <text evidence="1">Cell wall biogenesis; peptidoglycan biosynthesis.</text>
</comment>
<comment type="subcellular location">
    <subcellularLocation>
        <location evidence="1">Cytoplasm</location>
    </subcellularLocation>
</comment>
<comment type="similarity">
    <text evidence="1">Belongs to the MurCDEF family.</text>
</comment>
<accession>B1YKE8</accession>
<name>MURC_EXIS2</name>
<evidence type="ECO:0000255" key="1">
    <source>
        <dbReference type="HAMAP-Rule" id="MF_00046"/>
    </source>
</evidence>
<gene>
    <name evidence="1" type="primary">murC</name>
    <name type="ordered locus">Exig_2249</name>
</gene>
<proteinExistence type="inferred from homology"/>
<keyword id="KW-0067">ATP-binding</keyword>
<keyword id="KW-0131">Cell cycle</keyword>
<keyword id="KW-0132">Cell division</keyword>
<keyword id="KW-0133">Cell shape</keyword>
<keyword id="KW-0961">Cell wall biogenesis/degradation</keyword>
<keyword id="KW-0963">Cytoplasm</keyword>
<keyword id="KW-0436">Ligase</keyword>
<keyword id="KW-0547">Nucleotide-binding</keyword>
<keyword id="KW-0573">Peptidoglycan synthesis</keyword>
<keyword id="KW-1185">Reference proteome</keyword>
<organism>
    <name type="scientific">Exiguobacterium sibiricum (strain DSM 17290 / CCUG 55495 / CIP 109462 / JCM 13490 / 255-15)</name>
    <dbReference type="NCBI Taxonomy" id="262543"/>
    <lineage>
        <taxon>Bacteria</taxon>
        <taxon>Bacillati</taxon>
        <taxon>Bacillota</taxon>
        <taxon>Bacilli</taxon>
        <taxon>Bacillales</taxon>
        <taxon>Bacillales Family XII. Incertae Sedis</taxon>
        <taxon>Exiguobacterium</taxon>
    </lineage>
</organism>
<protein>
    <recommendedName>
        <fullName evidence="1">UDP-N-acetylmuramate--L-alanine ligase</fullName>
        <ecNumber evidence="1">6.3.2.8</ecNumber>
    </recommendedName>
    <alternativeName>
        <fullName evidence="1">UDP-N-acetylmuramoyl-L-alanine synthetase</fullName>
    </alternativeName>
</protein>
<sequence length="431" mass="48261">MTNYHFVGIKGTGMSALAQVLHEMNHQVQGSDIDKHIFTEDALRAKGIPFFPFSAENIKEDQVIIQGNAFGDDHPEIARAKELDLTIYHYYDFLGHLADEYRSVAITGSHGKTSTTGLLSHVLSGITPTAFLIGDGTGAGVAEAKAFVFEACEYKRHFLYYKPDYAIMTNIDFDHSDYFTGIDDVVSAFQEMAMQVKQAIVACGDDEHLQNLQANVPILYYGFGENNDFRAENATSTPDGTSFDVYLRDDFYGTFLIPGFGRHHVLNALSVIAICQYEGLNKEEVAARLSTFGGVKRRFSETNFGSQILVDDYAHHPKEISATIESARKKYPDREVVAIFQPHTYTRLKSFMDDFATSLREADATYLCEIFGSAREQEGQVRVEDLQDKVPGSDILTRDNVSILRKHENAVLLFMGAGDIQTYQHQYENAK</sequence>
<dbReference type="EC" id="6.3.2.8" evidence="1"/>
<dbReference type="EMBL" id="CP001022">
    <property type="protein sequence ID" value="ACB61701.1"/>
    <property type="molecule type" value="Genomic_DNA"/>
</dbReference>
<dbReference type="RefSeq" id="WP_012371118.1">
    <property type="nucleotide sequence ID" value="NC_010556.1"/>
</dbReference>
<dbReference type="SMR" id="B1YKE8"/>
<dbReference type="STRING" id="262543.Exig_2249"/>
<dbReference type="KEGG" id="esi:Exig_2249"/>
<dbReference type="eggNOG" id="COG0773">
    <property type="taxonomic scope" value="Bacteria"/>
</dbReference>
<dbReference type="HOGENOM" id="CLU_028104_1_0_9"/>
<dbReference type="OrthoDB" id="9804126at2"/>
<dbReference type="UniPathway" id="UPA00219"/>
<dbReference type="Proteomes" id="UP000001681">
    <property type="component" value="Chromosome"/>
</dbReference>
<dbReference type="GO" id="GO:0005737">
    <property type="term" value="C:cytoplasm"/>
    <property type="evidence" value="ECO:0007669"/>
    <property type="project" value="UniProtKB-SubCell"/>
</dbReference>
<dbReference type="GO" id="GO:0005524">
    <property type="term" value="F:ATP binding"/>
    <property type="evidence" value="ECO:0007669"/>
    <property type="project" value="UniProtKB-UniRule"/>
</dbReference>
<dbReference type="GO" id="GO:0008763">
    <property type="term" value="F:UDP-N-acetylmuramate-L-alanine ligase activity"/>
    <property type="evidence" value="ECO:0007669"/>
    <property type="project" value="UniProtKB-UniRule"/>
</dbReference>
<dbReference type="GO" id="GO:0051301">
    <property type="term" value="P:cell division"/>
    <property type="evidence" value="ECO:0007669"/>
    <property type="project" value="UniProtKB-KW"/>
</dbReference>
<dbReference type="GO" id="GO:0071555">
    <property type="term" value="P:cell wall organization"/>
    <property type="evidence" value="ECO:0007669"/>
    <property type="project" value="UniProtKB-KW"/>
</dbReference>
<dbReference type="GO" id="GO:0009252">
    <property type="term" value="P:peptidoglycan biosynthetic process"/>
    <property type="evidence" value="ECO:0007669"/>
    <property type="project" value="UniProtKB-UniRule"/>
</dbReference>
<dbReference type="GO" id="GO:0008360">
    <property type="term" value="P:regulation of cell shape"/>
    <property type="evidence" value="ECO:0007669"/>
    <property type="project" value="UniProtKB-KW"/>
</dbReference>
<dbReference type="Gene3D" id="3.90.190.20">
    <property type="entry name" value="Mur ligase, C-terminal domain"/>
    <property type="match status" value="1"/>
</dbReference>
<dbReference type="Gene3D" id="3.40.1190.10">
    <property type="entry name" value="Mur-like, catalytic domain"/>
    <property type="match status" value="1"/>
</dbReference>
<dbReference type="Gene3D" id="3.40.50.720">
    <property type="entry name" value="NAD(P)-binding Rossmann-like Domain"/>
    <property type="match status" value="1"/>
</dbReference>
<dbReference type="HAMAP" id="MF_00046">
    <property type="entry name" value="MurC"/>
    <property type="match status" value="1"/>
</dbReference>
<dbReference type="InterPro" id="IPR036565">
    <property type="entry name" value="Mur-like_cat_sf"/>
</dbReference>
<dbReference type="InterPro" id="IPR004101">
    <property type="entry name" value="Mur_ligase_C"/>
</dbReference>
<dbReference type="InterPro" id="IPR036615">
    <property type="entry name" value="Mur_ligase_C_dom_sf"/>
</dbReference>
<dbReference type="InterPro" id="IPR013221">
    <property type="entry name" value="Mur_ligase_cen"/>
</dbReference>
<dbReference type="InterPro" id="IPR000713">
    <property type="entry name" value="Mur_ligase_N"/>
</dbReference>
<dbReference type="InterPro" id="IPR050061">
    <property type="entry name" value="MurCDEF_pg_biosynth"/>
</dbReference>
<dbReference type="InterPro" id="IPR005758">
    <property type="entry name" value="UDP-N-AcMur_Ala_ligase_MurC"/>
</dbReference>
<dbReference type="NCBIfam" id="TIGR01082">
    <property type="entry name" value="murC"/>
    <property type="match status" value="1"/>
</dbReference>
<dbReference type="PANTHER" id="PTHR43445:SF3">
    <property type="entry name" value="UDP-N-ACETYLMURAMATE--L-ALANINE LIGASE"/>
    <property type="match status" value="1"/>
</dbReference>
<dbReference type="PANTHER" id="PTHR43445">
    <property type="entry name" value="UDP-N-ACETYLMURAMATE--L-ALANINE LIGASE-RELATED"/>
    <property type="match status" value="1"/>
</dbReference>
<dbReference type="Pfam" id="PF01225">
    <property type="entry name" value="Mur_ligase"/>
    <property type="match status" value="1"/>
</dbReference>
<dbReference type="Pfam" id="PF02875">
    <property type="entry name" value="Mur_ligase_C"/>
    <property type="match status" value="1"/>
</dbReference>
<dbReference type="Pfam" id="PF08245">
    <property type="entry name" value="Mur_ligase_M"/>
    <property type="match status" value="1"/>
</dbReference>
<dbReference type="SUPFAM" id="SSF51984">
    <property type="entry name" value="MurCD N-terminal domain"/>
    <property type="match status" value="1"/>
</dbReference>
<dbReference type="SUPFAM" id="SSF53623">
    <property type="entry name" value="MurD-like peptide ligases, catalytic domain"/>
    <property type="match status" value="1"/>
</dbReference>
<dbReference type="SUPFAM" id="SSF53244">
    <property type="entry name" value="MurD-like peptide ligases, peptide-binding domain"/>
    <property type="match status" value="1"/>
</dbReference>